<gene>
    <name evidence="4" type="primary">gene 11</name>
</gene>
<dbReference type="EMBL" id="AF064539">
    <property type="protein sequence ID" value="AAC19048.1"/>
    <property type="molecule type" value="Genomic_DNA"/>
</dbReference>
<dbReference type="PIR" id="T13097">
    <property type="entry name" value="T13097"/>
</dbReference>
<dbReference type="RefSeq" id="NP_046906.1">
    <property type="nucleotide sequence ID" value="NC_001901.1"/>
</dbReference>
<dbReference type="GeneID" id="1261650"/>
<dbReference type="KEGG" id="vg:1261650"/>
<dbReference type="Proteomes" id="UP000002132">
    <property type="component" value="Genome"/>
</dbReference>
<dbReference type="GO" id="GO:0030430">
    <property type="term" value="C:host cell cytoplasm"/>
    <property type="evidence" value="ECO:0007669"/>
    <property type="project" value="UniProtKB-SubCell"/>
</dbReference>
<dbReference type="GO" id="GO:0098015">
    <property type="term" value="C:virus tail"/>
    <property type="evidence" value="ECO:0007669"/>
    <property type="project" value="UniProtKB-KW"/>
</dbReference>
<dbReference type="InterPro" id="IPR010633">
    <property type="entry name" value="Phage_lambda_GpZ"/>
</dbReference>
<dbReference type="Pfam" id="PF06763">
    <property type="entry name" value="Minor_tail_Z"/>
    <property type="match status" value="1"/>
</dbReference>
<dbReference type="PIRSF" id="PIRSF004395">
    <property type="entry name" value="Tail_Z"/>
    <property type="match status" value="1"/>
</dbReference>
<accession>O64325</accession>
<keyword id="KW-1035">Host cytoplasm</keyword>
<keyword id="KW-0426">Late protein</keyword>
<keyword id="KW-1185">Reference proteome</keyword>
<keyword id="KW-1227">Viral tail protein</keyword>
<keyword id="KW-0946">Virion</keyword>
<comment type="function">
    <text evidence="1">Stabilizes the tail structure and acts as a connector between the end of tail and the portal vertex of the capsid.</text>
</comment>
<comment type="subcellular location">
    <subcellularLocation>
        <location evidence="1">Virion</location>
    </subcellularLocation>
    <subcellularLocation>
        <location evidence="1">Host cytoplasm</location>
    </subcellularLocation>
</comment>
<comment type="similarity">
    <text evidence="3">Belongs to the Lambdalikevirus tail completion protein family.</text>
</comment>
<evidence type="ECO:0000250" key="1">
    <source>
        <dbReference type="UniProtKB" id="P03731"/>
    </source>
</evidence>
<evidence type="ECO:0000303" key="2">
    <source>
    </source>
</evidence>
<evidence type="ECO:0000305" key="3"/>
<evidence type="ECO:0000312" key="4">
    <source>
        <dbReference type="EMBL" id="AAC19048.1"/>
    </source>
</evidence>
<sequence>MSLKGLEQAIENLNSISKTAVPRASAQAVNRVANRAVSRSVAVVSKDTRVPRKLVKQRARVKRATVNKPRALIRVNRGNLPAIKLGTASVRLSRRKRDKKGANSVLRIGPFRFPGGFIQQLKNGRWHVMRRTSKPRYPIEVVSIPLAAPLTTAFKEELPKLMESDMPKELRASLTNQLRLILTR</sequence>
<reference key="1">
    <citation type="journal article" date="2000" name="J. Mol. Biol.">
        <title>Genomic sequence and analysis of the atypical temperate bacteriophage N15.</title>
        <authorList>
            <person name="Ravin V."/>
            <person name="Ravin N."/>
            <person name="Casjens S."/>
            <person name="Ford M.E."/>
            <person name="Hatfull G.F."/>
            <person name="Hendrix R.W."/>
        </authorList>
    </citation>
    <scope>NUCLEOTIDE SEQUENCE [LARGE SCALE GENOMIC DNA]</scope>
    <scope>IDENTIFICATION</scope>
</reference>
<organismHost>
    <name type="scientific">Escherichia coli</name>
    <dbReference type="NCBI Taxonomy" id="562"/>
</organismHost>
<protein>
    <recommendedName>
        <fullName evidence="2">Tail completion protein</fullName>
    </recommendedName>
    <alternativeName>
        <fullName evidence="3">Gene product 11</fullName>
        <shortName evidence="4">gp11</shortName>
    </alternativeName>
    <alternativeName>
        <fullName evidence="3">Tail connector protein</fullName>
    </alternativeName>
    <alternativeName>
        <fullName evidence="3">Tail terminator protein</fullName>
    </alternativeName>
</protein>
<proteinExistence type="inferred from homology"/>
<organism>
    <name type="scientific">Escherichia phage N15</name>
    <name type="common">Bacteriophage N15</name>
    <dbReference type="NCBI Taxonomy" id="1604876"/>
    <lineage>
        <taxon>Viruses</taxon>
        <taxon>Duplodnaviria</taxon>
        <taxon>Heunggongvirae</taxon>
        <taxon>Uroviricota</taxon>
        <taxon>Caudoviricetes</taxon>
        <taxon>Ravinvirus</taxon>
        <taxon>Ravinvirus N15</taxon>
    </lineage>
</organism>
<name>COMPL_BPN15</name>
<feature type="chain" id="PRO_0000432907" description="Tail completion protein">
    <location>
        <begin position="1"/>
        <end position="184"/>
    </location>
</feature>